<name>RLMB_PHOLL</name>
<proteinExistence type="inferred from homology"/>
<sequence>MSEIIYGIHAVKALLERDPQRFIEVYVLKGREDRRLTPLIHALESIGMTIQLANRQWLDNQTEGAVHQGIIAKVKPGRQYQENDLPDLLAQVETPFLLVLDGVTDPHNLGACLRSADAAGVHAVIIPRDRSAQLNATAKKVACGAAESVPLIRVTNLARTLRLLQEYNIWVVGTAGEADHTLYQSKLTGPMALVMGAEGEGMRRLTREHCDELISIPMVGSVSSLNVSVATGVCLFEAVRQRSS</sequence>
<gene>
    <name evidence="1" type="primary">rlmB</name>
    <name type="ordered locus">plu4574</name>
</gene>
<keyword id="KW-0963">Cytoplasm</keyword>
<keyword id="KW-0489">Methyltransferase</keyword>
<keyword id="KW-1185">Reference proteome</keyword>
<keyword id="KW-0698">rRNA processing</keyword>
<keyword id="KW-0949">S-adenosyl-L-methionine</keyword>
<keyword id="KW-0808">Transferase</keyword>
<evidence type="ECO:0000255" key="1">
    <source>
        <dbReference type="HAMAP-Rule" id="MF_01887"/>
    </source>
</evidence>
<feature type="chain" id="PRO_0000159795" description="23S rRNA (guanosine-2'-O-)-methyltransferase RlmB">
    <location>
        <begin position="1"/>
        <end position="244"/>
    </location>
</feature>
<feature type="binding site" evidence="1">
    <location>
        <position position="196"/>
    </location>
    <ligand>
        <name>S-adenosyl-L-methionine</name>
        <dbReference type="ChEBI" id="CHEBI:59789"/>
    </ligand>
</feature>
<feature type="binding site" evidence="1">
    <location>
        <position position="216"/>
    </location>
    <ligand>
        <name>S-adenosyl-L-methionine</name>
        <dbReference type="ChEBI" id="CHEBI:59789"/>
    </ligand>
</feature>
<feature type="binding site" evidence="1">
    <location>
        <position position="225"/>
    </location>
    <ligand>
        <name>S-adenosyl-L-methionine</name>
        <dbReference type="ChEBI" id="CHEBI:59789"/>
    </ligand>
</feature>
<dbReference type="EC" id="2.1.1.185" evidence="1"/>
<dbReference type="EMBL" id="BX571874">
    <property type="protein sequence ID" value="CAE16946.1"/>
    <property type="molecule type" value="Genomic_DNA"/>
</dbReference>
<dbReference type="RefSeq" id="WP_011148647.1">
    <property type="nucleotide sequence ID" value="NC_005126.1"/>
</dbReference>
<dbReference type="SMR" id="Q7MYU6"/>
<dbReference type="STRING" id="243265.plu4574"/>
<dbReference type="GeneID" id="48850786"/>
<dbReference type="KEGG" id="plu:plu4574"/>
<dbReference type="eggNOG" id="COG0566">
    <property type="taxonomic scope" value="Bacteria"/>
</dbReference>
<dbReference type="HOGENOM" id="CLU_021322_0_1_6"/>
<dbReference type="OrthoDB" id="9785673at2"/>
<dbReference type="Proteomes" id="UP000002514">
    <property type="component" value="Chromosome"/>
</dbReference>
<dbReference type="GO" id="GO:0005829">
    <property type="term" value="C:cytosol"/>
    <property type="evidence" value="ECO:0007669"/>
    <property type="project" value="TreeGrafter"/>
</dbReference>
<dbReference type="GO" id="GO:0003723">
    <property type="term" value="F:RNA binding"/>
    <property type="evidence" value="ECO:0007669"/>
    <property type="project" value="InterPro"/>
</dbReference>
<dbReference type="GO" id="GO:0070039">
    <property type="term" value="F:rRNA (guanosine-2'-O-)-methyltransferase activity"/>
    <property type="evidence" value="ECO:0007669"/>
    <property type="project" value="UniProtKB-UniRule"/>
</dbReference>
<dbReference type="CDD" id="cd18103">
    <property type="entry name" value="SpoU-like_RlmB"/>
    <property type="match status" value="1"/>
</dbReference>
<dbReference type="FunFam" id="3.40.1280.10:FF:000005">
    <property type="entry name" value="23S rRNA (guanosine-2'-O-)-methyltransferase RlmB"/>
    <property type="match status" value="1"/>
</dbReference>
<dbReference type="FunFam" id="3.30.1330.30:FF:000007">
    <property type="entry name" value="23S rRNA methyltransferase"/>
    <property type="match status" value="1"/>
</dbReference>
<dbReference type="Gene3D" id="3.30.1330.30">
    <property type="match status" value="1"/>
</dbReference>
<dbReference type="Gene3D" id="3.40.1280.10">
    <property type="match status" value="1"/>
</dbReference>
<dbReference type="HAMAP" id="MF_01887">
    <property type="entry name" value="23SrRNA_methyltr_B"/>
    <property type="match status" value="1"/>
</dbReference>
<dbReference type="InterPro" id="IPR024915">
    <property type="entry name" value="23S_rRNA_MeTrfase_RlmB"/>
</dbReference>
<dbReference type="InterPro" id="IPR029028">
    <property type="entry name" value="Alpha/beta_knot_MTases"/>
</dbReference>
<dbReference type="InterPro" id="IPR029064">
    <property type="entry name" value="Ribosomal_eL30-like_sf"/>
</dbReference>
<dbReference type="InterPro" id="IPR004441">
    <property type="entry name" value="rRNA_MeTrfase_TrmH"/>
</dbReference>
<dbReference type="InterPro" id="IPR001537">
    <property type="entry name" value="SpoU_MeTrfase"/>
</dbReference>
<dbReference type="InterPro" id="IPR013123">
    <property type="entry name" value="SpoU_subst-bd"/>
</dbReference>
<dbReference type="InterPro" id="IPR029026">
    <property type="entry name" value="tRNA_m1G_MTases_N"/>
</dbReference>
<dbReference type="NCBIfam" id="NF008386">
    <property type="entry name" value="PRK11181.1"/>
    <property type="match status" value="1"/>
</dbReference>
<dbReference type="NCBIfam" id="TIGR00186">
    <property type="entry name" value="rRNA_methyl_3"/>
    <property type="match status" value="1"/>
</dbReference>
<dbReference type="PANTHER" id="PTHR46429">
    <property type="entry name" value="23S RRNA (GUANOSINE-2'-O-)-METHYLTRANSFERASE RLMB"/>
    <property type="match status" value="1"/>
</dbReference>
<dbReference type="PANTHER" id="PTHR46429:SF1">
    <property type="entry name" value="23S RRNA (GUANOSINE-2'-O-)-METHYLTRANSFERASE RLMB"/>
    <property type="match status" value="1"/>
</dbReference>
<dbReference type="Pfam" id="PF00588">
    <property type="entry name" value="SpoU_methylase"/>
    <property type="match status" value="1"/>
</dbReference>
<dbReference type="Pfam" id="PF08032">
    <property type="entry name" value="SpoU_sub_bind"/>
    <property type="match status" value="1"/>
</dbReference>
<dbReference type="SMART" id="SM00967">
    <property type="entry name" value="SpoU_sub_bind"/>
    <property type="match status" value="1"/>
</dbReference>
<dbReference type="SUPFAM" id="SSF75217">
    <property type="entry name" value="alpha/beta knot"/>
    <property type="match status" value="1"/>
</dbReference>
<dbReference type="SUPFAM" id="SSF55315">
    <property type="entry name" value="L30e-like"/>
    <property type="match status" value="1"/>
</dbReference>
<comment type="function">
    <text evidence="1">Specifically methylates the ribose of guanosine 2251 in 23S rRNA.</text>
</comment>
<comment type="catalytic activity">
    <reaction evidence="1">
        <text>guanosine(2251) in 23S rRNA + S-adenosyl-L-methionine = 2'-O-methylguanosine(2251) in 23S rRNA + S-adenosyl-L-homocysteine + H(+)</text>
        <dbReference type="Rhea" id="RHEA:24140"/>
        <dbReference type="Rhea" id="RHEA-COMP:10239"/>
        <dbReference type="Rhea" id="RHEA-COMP:10241"/>
        <dbReference type="ChEBI" id="CHEBI:15378"/>
        <dbReference type="ChEBI" id="CHEBI:57856"/>
        <dbReference type="ChEBI" id="CHEBI:59789"/>
        <dbReference type="ChEBI" id="CHEBI:74269"/>
        <dbReference type="ChEBI" id="CHEBI:74445"/>
        <dbReference type="EC" id="2.1.1.185"/>
    </reaction>
</comment>
<comment type="subunit">
    <text evidence="1">Homodimer.</text>
</comment>
<comment type="subcellular location">
    <subcellularLocation>
        <location evidence="1">Cytoplasm</location>
    </subcellularLocation>
</comment>
<comment type="similarity">
    <text evidence="1">Belongs to the class IV-like SAM-binding methyltransferase superfamily. RNA methyltransferase TrmH family. RlmB subfamily.</text>
</comment>
<reference key="1">
    <citation type="journal article" date="2003" name="Nat. Biotechnol.">
        <title>The genome sequence of the entomopathogenic bacterium Photorhabdus luminescens.</title>
        <authorList>
            <person name="Duchaud E."/>
            <person name="Rusniok C."/>
            <person name="Frangeul L."/>
            <person name="Buchrieser C."/>
            <person name="Givaudan A."/>
            <person name="Taourit S."/>
            <person name="Bocs S."/>
            <person name="Boursaux-Eude C."/>
            <person name="Chandler M."/>
            <person name="Charles J.-F."/>
            <person name="Dassa E."/>
            <person name="Derose R."/>
            <person name="Derzelle S."/>
            <person name="Freyssinet G."/>
            <person name="Gaudriault S."/>
            <person name="Medigue C."/>
            <person name="Lanois A."/>
            <person name="Powell K."/>
            <person name="Siguier P."/>
            <person name="Vincent R."/>
            <person name="Wingate V."/>
            <person name="Zouine M."/>
            <person name="Glaser P."/>
            <person name="Boemare N."/>
            <person name="Danchin A."/>
            <person name="Kunst F."/>
        </authorList>
    </citation>
    <scope>NUCLEOTIDE SEQUENCE [LARGE SCALE GENOMIC DNA]</scope>
    <source>
        <strain>DSM 15139 / CIP 105565 / TT01</strain>
    </source>
</reference>
<accession>Q7MYU6</accession>
<organism>
    <name type="scientific">Photorhabdus laumondii subsp. laumondii (strain DSM 15139 / CIP 105565 / TT01)</name>
    <name type="common">Photorhabdus luminescens subsp. laumondii</name>
    <dbReference type="NCBI Taxonomy" id="243265"/>
    <lineage>
        <taxon>Bacteria</taxon>
        <taxon>Pseudomonadati</taxon>
        <taxon>Pseudomonadota</taxon>
        <taxon>Gammaproteobacteria</taxon>
        <taxon>Enterobacterales</taxon>
        <taxon>Morganellaceae</taxon>
        <taxon>Photorhabdus</taxon>
    </lineage>
</organism>
<protein>
    <recommendedName>
        <fullName evidence="1">23S rRNA (guanosine-2'-O-)-methyltransferase RlmB</fullName>
        <ecNumber evidence="1">2.1.1.185</ecNumber>
    </recommendedName>
    <alternativeName>
        <fullName evidence="1">23S rRNA (guanosine2251 2'-O)-methyltransferase</fullName>
    </alternativeName>
    <alternativeName>
        <fullName evidence="1">23S rRNA Gm2251 2'-O-methyltransferase</fullName>
    </alternativeName>
</protein>